<proteinExistence type="evidence at protein level"/>
<dbReference type="EC" id="2.7.4.-" evidence="1"/>
<dbReference type="EC" id="2.7.7.83" evidence="1"/>
<dbReference type="EC" id="2.7.7.23" evidence="1"/>
<dbReference type="EMBL" id="AK047566">
    <property type="protein sequence ID" value="BAC33089.1"/>
    <property type="molecule type" value="mRNA"/>
</dbReference>
<dbReference type="EMBL" id="AK049519">
    <property type="protein sequence ID" value="BAC33791.1"/>
    <property type="molecule type" value="mRNA"/>
</dbReference>
<dbReference type="EMBL" id="AK081690">
    <property type="protein sequence ID" value="BAC38294.1"/>
    <property type="molecule type" value="mRNA"/>
</dbReference>
<dbReference type="EMBL" id="BC016406">
    <property type="protein sequence ID" value="AAH16406.1"/>
    <property type="molecule type" value="mRNA"/>
</dbReference>
<dbReference type="EMBL" id="BC017547">
    <property type="protein sequence ID" value="AAH17547.1"/>
    <property type="molecule type" value="mRNA"/>
</dbReference>
<dbReference type="CCDS" id="CCDS15467.1">
    <molecule id="Q91YN5-3"/>
</dbReference>
<dbReference type="CCDS" id="CCDS83631.1">
    <molecule id="Q91YN5-2"/>
</dbReference>
<dbReference type="CCDS" id="CCDS83632.1">
    <molecule id="Q91YN5-1"/>
</dbReference>
<dbReference type="RefSeq" id="NP_001291974.1">
    <property type="nucleotide sequence ID" value="NM_001305045.1"/>
</dbReference>
<dbReference type="RefSeq" id="NP_001291975.1">
    <property type="nucleotide sequence ID" value="NM_001305046.1"/>
</dbReference>
<dbReference type="RefSeq" id="NP_598567.2">
    <property type="nucleotide sequence ID" value="NM_133806.5"/>
</dbReference>
<dbReference type="RefSeq" id="XP_006496671.2">
    <property type="nucleotide sequence ID" value="XM_006496608.3"/>
</dbReference>
<dbReference type="PDB" id="1VM8">
    <property type="method" value="X-ray"/>
    <property type="resolution" value="2.50 A"/>
    <property type="chains" value="A/B=1-522"/>
</dbReference>
<dbReference type="PDBsum" id="1VM8"/>
<dbReference type="SMR" id="Q91YN5"/>
<dbReference type="BioGRID" id="223459">
    <property type="interactions" value="3"/>
</dbReference>
<dbReference type="FunCoup" id="Q91YN5">
    <property type="interactions" value="2532"/>
</dbReference>
<dbReference type="STRING" id="10090.ENSMUSP00000106983"/>
<dbReference type="GlyGen" id="Q91YN5">
    <property type="glycosylation" value="1 site, 1 N-linked glycan (1 site)"/>
</dbReference>
<dbReference type="iPTMnet" id="Q91YN5"/>
<dbReference type="PhosphoSitePlus" id="Q91YN5"/>
<dbReference type="jPOST" id="Q91YN5"/>
<dbReference type="PaxDb" id="10090-ENSMUSP00000106983"/>
<dbReference type="PeptideAtlas" id="Q91YN5"/>
<dbReference type="ProteomicsDB" id="298168">
    <molecule id="Q91YN5-1"/>
</dbReference>
<dbReference type="ProteomicsDB" id="298169">
    <molecule id="Q91YN5-2"/>
</dbReference>
<dbReference type="ProteomicsDB" id="298170">
    <molecule id="Q91YN5-3"/>
</dbReference>
<dbReference type="Pumba" id="Q91YN5"/>
<dbReference type="DNASU" id="107652"/>
<dbReference type="GeneID" id="107652"/>
<dbReference type="KEGG" id="mmu:107652"/>
<dbReference type="UCSC" id="uc007dlw.2">
    <molecule id="Q91YN5-3"/>
    <property type="organism name" value="mouse"/>
</dbReference>
<dbReference type="UCSC" id="uc007dly.2">
    <molecule id="Q91YN5-2"/>
    <property type="organism name" value="mouse"/>
</dbReference>
<dbReference type="AGR" id="MGI:1334459"/>
<dbReference type="CTD" id="6675"/>
<dbReference type="MGI" id="MGI:1334459">
    <property type="gene designation" value="Uap1"/>
</dbReference>
<dbReference type="eggNOG" id="KOG2388">
    <property type="taxonomic scope" value="Eukaryota"/>
</dbReference>
<dbReference type="InParanoid" id="Q91YN5"/>
<dbReference type="OrthoDB" id="532420at2759"/>
<dbReference type="PhylomeDB" id="Q91YN5"/>
<dbReference type="Reactome" id="R-MMU-446210">
    <property type="pathway name" value="Synthesis of UDP-N-acetyl-glucosamine"/>
</dbReference>
<dbReference type="UniPathway" id="UPA00113">
    <property type="reaction ID" value="UER00533"/>
</dbReference>
<dbReference type="BioGRID-ORCS" id="107652">
    <property type="hits" value="0 hits in 62 CRISPR screens"/>
</dbReference>
<dbReference type="ChiTaRS" id="Uap1">
    <property type="organism name" value="mouse"/>
</dbReference>
<dbReference type="EvolutionaryTrace" id="Q91YN5"/>
<dbReference type="PRO" id="PR:Q91YN5"/>
<dbReference type="Proteomes" id="UP000000589">
    <property type="component" value="Unplaced"/>
</dbReference>
<dbReference type="RNAct" id="Q91YN5">
    <property type="molecule type" value="protein"/>
</dbReference>
<dbReference type="GO" id="GO:0005829">
    <property type="term" value="C:cytosol"/>
    <property type="evidence" value="ECO:0007669"/>
    <property type="project" value="UniProtKB-SubCell"/>
</dbReference>
<dbReference type="GO" id="GO:0141090">
    <property type="term" value="F:protein serine pyrophosphorylase activity"/>
    <property type="evidence" value="ECO:0007669"/>
    <property type="project" value="RHEA"/>
</dbReference>
<dbReference type="GO" id="GO:0052630">
    <property type="term" value="F:UDP-N-acetylgalactosamine diphosphorylase activity"/>
    <property type="evidence" value="ECO:0007669"/>
    <property type="project" value="UniProtKB-EC"/>
</dbReference>
<dbReference type="GO" id="GO:0003977">
    <property type="term" value="F:UDP-N-acetylglucosamine diphosphorylase activity"/>
    <property type="evidence" value="ECO:0007669"/>
    <property type="project" value="UniProtKB-EC"/>
</dbReference>
<dbReference type="GO" id="GO:0045087">
    <property type="term" value="P:innate immune response"/>
    <property type="evidence" value="ECO:0007669"/>
    <property type="project" value="UniProtKB-KW"/>
</dbReference>
<dbReference type="GO" id="GO:0006048">
    <property type="term" value="P:UDP-N-acetylglucosamine biosynthetic process"/>
    <property type="evidence" value="ECO:0007669"/>
    <property type="project" value="UniProtKB-UniPathway"/>
</dbReference>
<dbReference type="CDD" id="cd04193">
    <property type="entry name" value="UDPGlcNAc_PPase"/>
    <property type="match status" value="1"/>
</dbReference>
<dbReference type="FunFam" id="2.10.10.100:FF:000001">
    <property type="entry name" value="UDP-N-acetylhexosamine pyrophosphorylase isoform X1"/>
    <property type="match status" value="1"/>
</dbReference>
<dbReference type="FunFam" id="3.90.550.10:FF:000043">
    <property type="entry name" value="UDP-N-acetylhexosamine pyrophosphorylase isoform X2"/>
    <property type="match status" value="1"/>
</dbReference>
<dbReference type="Gene3D" id="2.10.10.100">
    <property type="match status" value="1"/>
</dbReference>
<dbReference type="Gene3D" id="3.90.550.10">
    <property type="entry name" value="Spore Coat Polysaccharide Biosynthesis Protein SpsA, Chain A"/>
    <property type="match status" value="1"/>
</dbReference>
<dbReference type="InterPro" id="IPR029044">
    <property type="entry name" value="Nucleotide-diphossugar_trans"/>
</dbReference>
<dbReference type="InterPro" id="IPR039741">
    <property type="entry name" value="UDP-sugar_pyrophosphorylase"/>
</dbReference>
<dbReference type="InterPro" id="IPR002618">
    <property type="entry name" value="UDPGP_fam"/>
</dbReference>
<dbReference type="PANTHER" id="PTHR11952">
    <property type="entry name" value="UDP- GLUCOSE PYROPHOSPHORYLASE"/>
    <property type="match status" value="1"/>
</dbReference>
<dbReference type="PANTHER" id="PTHR11952:SF4">
    <property type="entry name" value="UDP-N-ACETYLHEXOSAMINE PYROPHOSPHORYLASE"/>
    <property type="match status" value="1"/>
</dbReference>
<dbReference type="Pfam" id="PF01704">
    <property type="entry name" value="UDPGP"/>
    <property type="match status" value="1"/>
</dbReference>
<dbReference type="SUPFAM" id="SSF53448">
    <property type="entry name" value="Nucleotide-diphospho-sugar transferases"/>
    <property type="match status" value="1"/>
</dbReference>
<reference key="1">
    <citation type="journal article" date="2005" name="Science">
        <title>The transcriptional landscape of the mammalian genome.</title>
        <authorList>
            <person name="Carninci P."/>
            <person name="Kasukawa T."/>
            <person name="Katayama S."/>
            <person name="Gough J."/>
            <person name="Frith M.C."/>
            <person name="Maeda N."/>
            <person name="Oyama R."/>
            <person name="Ravasi T."/>
            <person name="Lenhard B."/>
            <person name="Wells C."/>
            <person name="Kodzius R."/>
            <person name="Shimokawa K."/>
            <person name="Bajic V.B."/>
            <person name="Brenner S.E."/>
            <person name="Batalov S."/>
            <person name="Forrest A.R."/>
            <person name="Zavolan M."/>
            <person name="Davis M.J."/>
            <person name="Wilming L.G."/>
            <person name="Aidinis V."/>
            <person name="Allen J.E."/>
            <person name="Ambesi-Impiombato A."/>
            <person name="Apweiler R."/>
            <person name="Aturaliya R.N."/>
            <person name="Bailey T.L."/>
            <person name="Bansal M."/>
            <person name="Baxter L."/>
            <person name="Beisel K.W."/>
            <person name="Bersano T."/>
            <person name="Bono H."/>
            <person name="Chalk A.M."/>
            <person name="Chiu K.P."/>
            <person name="Choudhary V."/>
            <person name="Christoffels A."/>
            <person name="Clutterbuck D.R."/>
            <person name="Crowe M.L."/>
            <person name="Dalla E."/>
            <person name="Dalrymple B.P."/>
            <person name="de Bono B."/>
            <person name="Della Gatta G."/>
            <person name="di Bernardo D."/>
            <person name="Down T."/>
            <person name="Engstrom P."/>
            <person name="Fagiolini M."/>
            <person name="Faulkner G."/>
            <person name="Fletcher C.F."/>
            <person name="Fukushima T."/>
            <person name="Furuno M."/>
            <person name="Futaki S."/>
            <person name="Gariboldi M."/>
            <person name="Georgii-Hemming P."/>
            <person name="Gingeras T.R."/>
            <person name="Gojobori T."/>
            <person name="Green R.E."/>
            <person name="Gustincich S."/>
            <person name="Harbers M."/>
            <person name="Hayashi Y."/>
            <person name="Hensch T.K."/>
            <person name="Hirokawa N."/>
            <person name="Hill D."/>
            <person name="Huminiecki L."/>
            <person name="Iacono M."/>
            <person name="Ikeo K."/>
            <person name="Iwama A."/>
            <person name="Ishikawa T."/>
            <person name="Jakt M."/>
            <person name="Kanapin A."/>
            <person name="Katoh M."/>
            <person name="Kawasawa Y."/>
            <person name="Kelso J."/>
            <person name="Kitamura H."/>
            <person name="Kitano H."/>
            <person name="Kollias G."/>
            <person name="Krishnan S.P."/>
            <person name="Kruger A."/>
            <person name="Kummerfeld S.K."/>
            <person name="Kurochkin I.V."/>
            <person name="Lareau L.F."/>
            <person name="Lazarevic D."/>
            <person name="Lipovich L."/>
            <person name="Liu J."/>
            <person name="Liuni S."/>
            <person name="McWilliam S."/>
            <person name="Madan Babu M."/>
            <person name="Madera M."/>
            <person name="Marchionni L."/>
            <person name="Matsuda H."/>
            <person name="Matsuzawa S."/>
            <person name="Miki H."/>
            <person name="Mignone F."/>
            <person name="Miyake S."/>
            <person name="Morris K."/>
            <person name="Mottagui-Tabar S."/>
            <person name="Mulder N."/>
            <person name="Nakano N."/>
            <person name="Nakauchi H."/>
            <person name="Ng P."/>
            <person name="Nilsson R."/>
            <person name="Nishiguchi S."/>
            <person name="Nishikawa S."/>
            <person name="Nori F."/>
            <person name="Ohara O."/>
            <person name="Okazaki Y."/>
            <person name="Orlando V."/>
            <person name="Pang K.C."/>
            <person name="Pavan W.J."/>
            <person name="Pavesi G."/>
            <person name="Pesole G."/>
            <person name="Petrovsky N."/>
            <person name="Piazza S."/>
            <person name="Reed J."/>
            <person name="Reid J.F."/>
            <person name="Ring B.Z."/>
            <person name="Ringwald M."/>
            <person name="Rost B."/>
            <person name="Ruan Y."/>
            <person name="Salzberg S.L."/>
            <person name="Sandelin A."/>
            <person name="Schneider C."/>
            <person name="Schoenbach C."/>
            <person name="Sekiguchi K."/>
            <person name="Semple C.A."/>
            <person name="Seno S."/>
            <person name="Sessa L."/>
            <person name="Sheng Y."/>
            <person name="Shibata Y."/>
            <person name="Shimada H."/>
            <person name="Shimada K."/>
            <person name="Silva D."/>
            <person name="Sinclair B."/>
            <person name="Sperling S."/>
            <person name="Stupka E."/>
            <person name="Sugiura K."/>
            <person name="Sultana R."/>
            <person name="Takenaka Y."/>
            <person name="Taki K."/>
            <person name="Tammoja K."/>
            <person name="Tan S.L."/>
            <person name="Tang S."/>
            <person name="Taylor M.S."/>
            <person name="Tegner J."/>
            <person name="Teichmann S.A."/>
            <person name="Ueda H.R."/>
            <person name="van Nimwegen E."/>
            <person name="Verardo R."/>
            <person name="Wei C.L."/>
            <person name="Yagi K."/>
            <person name="Yamanishi H."/>
            <person name="Zabarovsky E."/>
            <person name="Zhu S."/>
            <person name="Zimmer A."/>
            <person name="Hide W."/>
            <person name="Bult C."/>
            <person name="Grimmond S.M."/>
            <person name="Teasdale R.D."/>
            <person name="Liu E.T."/>
            <person name="Brusic V."/>
            <person name="Quackenbush J."/>
            <person name="Wahlestedt C."/>
            <person name="Mattick J.S."/>
            <person name="Hume D.A."/>
            <person name="Kai C."/>
            <person name="Sasaki D."/>
            <person name="Tomaru Y."/>
            <person name="Fukuda S."/>
            <person name="Kanamori-Katayama M."/>
            <person name="Suzuki M."/>
            <person name="Aoki J."/>
            <person name="Arakawa T."/>
            <person name="Iida J."/>
            <person name="Imamura K."/>
            <person name="Itoh M."/>
            <person name="Kato T."/>
            <person name="Kawaji H."/>
            <person name="Kawagashira N."/>
            <person name="Kawashima T."/>
            <person name="Kojima M."/>
            <person name="Kondo S."/>
            <person name="Konno H."/>
            <person name="Nakano K."/>
            <person name="Ninomiya N."/>
            <person name="Nishio T."/>
            <person name="Okada M."/>
            <person name="Plessy C."/>
            <person name="Shibata K."/>
            <person name="Shiraki T."/>
            <person name="Suzuki S."/>
            <person name="Tagami M."/>
            <person name="Waki K."/>
            <person name="Watahiki A."/>
            <person name="Okamura-Oho Y."/>
            <person name="Suzuki H."/>
            <person name="Kawai J."/>
            <person name="Hayashizaki Y."/>
        </authorList>
    </citation>
    <scope>NUCLEOTIDE SEQUENCE [LARGE SCALE MRNA] (ISOFORMS AGX1 AND 3)</scope>
    <scope>VARIANT HIS-366</scope>
    <source>
        <strain>C57BL/6J</strain>
        <tissue>Cerebellum</tissue>
        <tissue>Embryo</tissue>
        <tissue>Head</tissue>
    </source>
</reference>
<reference key="2">
    <citation type="journal article" date="2004" name="Genome Res.">
        <title>The status, quality, and expansion of the NIH full-length cDNA project: the Mammalian Gene Collection (MGC).</title>
        <authorList>
            <consortium name="The MGC Project Team"/>
        </authorList>
    </citation>
    <scope>NUCLEOTIDE SEQUENCE [LARGE SCALE MRNA] (ISOFORMS AGX2 AND 3)</scope>
    <source>
        <strain>FVB/N</strain>
        <tissue>Mammary tumor</tissue>
        <tissue>Salivary gland</tissue>
    </source>
</reference>
<reference key="3">
    <citation type="journal article" date="2010" name="Cell">
        <title>A tissue-specific atlas of mouse protein phosphorylation and expression.</title>
        <authorList>
            <person name="Huttlin E.L."/>
            <person name="Jedrychowski M.P."/>
            <person name="Elias J.E."/>
            <person name="Goswami T."/>
            <person name="Rad R."/>
            <person name="Beausoleil S.A."/>
            <person name="Villen J."/>
            <person name="Haas W."/>
            <person name="Sowa M.E."/>
            <person name="Gygi S.P."/>
        </authorList>
    </citation>
    <scope>IDENTIFICATION BY MASS SPECTROMETRY [LARGE SCALE ANALYSIS]</scope>
    <source>
        <tissue>Brain</tissue>
        <tissue>Heart</tissue>
        <tissue>Kidney</tissue>
        <tissue>Liver</tissue>
        <tissue>Lung</tissue>
        <tissue>Pancreas</tissue>
        <tissue>Spleen</tissue>
        <tissue>Testis</tissue>
    </source>
</reference>
<reference key="4">
    <citation type="journal article" date="2023" name="Mol. Cell">
        <title>Metabolic enzyme UAP1 mediates IRF3 pyrophosphorylation to facilitate innate immune response.</title>
        <authorList>
            <person name="Yang S."/>
            <person name="Jin S."/>
            <person name="Xian H."/>
            <person name="Zhao Z."/>
            <person name="Wang L."/>
            <person name="Wu Y."/>
            <person name="Zhou L."/>
            <person name="Li M."/>
            <person name="Cui J."/>
        </authorList>
    </citation>
    <scope>FUNCTION</scope>
    <scope>DISRUPTION PHENOTYPE</scope>
</reference>
<reference key="5">
    <citation type="submission" date="2005-01" db="PDB data bank">
        <title>Crystal structure of UDP-N-acetylglucosamine pyrophosphorylase (AGX2) from Mus musculus.</title>
        <authorList>
            <consortium name="Joint center for structural genomics (JCSG)"/>
        </authorList>
    </citation>
    <scope>X-RAY CRYSTALLOGRAPHY (2.5 ANGSTROMS)</scope>
</reference>
<organism>
    <name type="scientific">Mus musculus</name>
    <name type="common">Mouse</name>
    <dbReference type="NCBI Taxonomy" id="10090"/>
    <lineage>
        <taxon>Eukaryota</taxon>
        <taxon>Metazoa</taxon>
        <taxon>Chordata</taxon>
        <taxon>Craniata</taxon>
        <taxon>Vertebrata</taxon>
        <taxon>Euteleostomi</taxon>
        <taxon>Mammalia</taxon>
        <taxon>Eutheria</taxon>
        <taxon>Euarchontoglires</taxon>
        <taxon>Glires</taxon>
        <taxon>Rodentia</taxon>
        <taxon>Myomorpha</taxon>
        <taxon>Muroidea</taxon>
        <taxon>Muridae</taxon>
        <taxon>Murinae</taxon>
        <taxon>Mus</taxon>
        <taxon>Mus</taxon>
    </lineage>
</organism>
<keyword id="KW-0002">3D-structure</keyword>
<keyword id="KW-0025">Alternative splicing</keyword>
<keyword id="KW-0963">Cytoplasm</keyword>
<keyword id="KW-0391">Immunity</keyword>
<keyword id="KW-0399">Innate immunity</keyword>
<keyword id="KW-0548">Nucleotidyltransferase</keyword>
<keyword id="KW-1185">Reference proteome</keyword>
<keyword id="KW-0808">Transferase</keyword>
<comment type="function">
    <text evidence="1 3">Catalyzes the last step in biosynthesis of uridine diphosphate-N-acetylglucosamine (UDP-GlcNAc) by converting UTP and glucosamine 1-phosphate (GlcNAc-1-P) to the sugar nucleotide (By similarity). Also converts UTP and galactosamine 1-phosphate (GalNAc-1-P) into uridine diphosphate-N-acetylgalactosamine (UDP-GalNAc) (By similarity). In addition to its role in metabolism, acts as a regulator of innate immunity in response to virus infection (PubMed:36603579). Regulates innate immunity by catalyzing pyrophosphorylation of IRF3 phosphorylated at 'Ser-386' by TBK1, promoting IRF3 dimerization and activation, leading to type I interferon responses (By similarity).</text>
</comment>
<comment type="function">
    <molecule>Isoform AGX1</molecule>
    <text evidence="1">Isoform AGX1 has 2 to 3 times higher activity towards galactosamine 1-phosphate (GalNAc-1-P).</text>
</comment>
<comment type="function">
    <molecule>Isoform AGX2</molecule>
    <text evidence="1">Isoform AGX2 has 8 times more activity towards glucosamine 1-phosphate (GlcNAc-1-P).</text>
</comment>
<comment type="catalytic activity">
    <reaction evidence="1">
        <text>N-acetyl-alpha-D-galactosamine 1-phosphate + UTP + H(+) = UDP-N-acetyl-alpha-D-galactosamine + diphosphate</text>
        <dbReference type="Rhea" id="RHEA:34363"/>
        <dbReference type="ChEBI" id="CHEBI:15378"/>
        <dbReference type="ChEBI" id="CHEBI:33019"/>
        <dbReference type="ChEBI" id="CHEBI:46398"/>
        <dbReference type="ChEBI" id="CHEBI:61970"/>
        <dbReference type="ChEBI" id="CHEBI:67138"/>
        <dbReference type="EC" id="2.7.7.83"/>
    </reaction>
    <physiologicalReaction direction="left-to-right" evidence="1">
        <dbReference type="Rhea" id="RHEA:34364"/>
    </physiologicalReaction>
</comment>
<comment type="catalytic activity">
    <reaction evidence="1">
        <text>N-acetyl-alpha-D-glucosamine 1-phosphate + UTP + H(+) = UDP-N-acetyl-alpha-D-glucosamine + diphosphate</text>
        <dbReference type="Rhea" id="RHEA:13509"/>
        <dbReference type="ChEBI" id="CHEBI:15378"/>
        <dbReference type="ChEBI" id="CHEBI:33019"/>
        <dbReference type="ChEBI" id="CHEBI:46398"/>
        <dbReference type="ChEBI" id="CHEBI:57705"/>
        <dbReference type="ChEBI" id="CHEBI:57776"/>
        <dbReference type="EC" id="2.7.7.23"/>
    </reaction>
    <physiologicalReaction direction="left-to-right" evidence="1">
        <dbReference type="Rhea" id="RHEA:13510"/>
    </physiologicalReaction>
</comment>
<comment type="catalytic activity">
    <reaction evidence="1">
        <text>5-diphospho-1D-myo-inositol 1,2,3,4,6-pentakisphosphate + O-phospho-L-seryl-[protein] = O-diphospho-L-seryl-[protein] + 1D-myo-inositol hexakisphosphate</text>
        <dbReference type="Rhea" id="RHEA:64104"/>
        <dbReference type="Rhea" id="RHEA-COMP:11604"/>
        <dbReference type="Rhea" id="RHEA-COMP:16509"/>
        <dbReference type="ChEBI" id="CHEBI:58130"/>
        <dbReference type="ChEBI" id="CHEBI:58628"/>
        <dbReference type="ChEBI" id="CHEBI:83421"/>
        <dbReference type="ChEBI" id="CHEBI:149682"/>
    </reaction>
    <physiologicalReaction direction="left-to-right" evidence="1">
        <dbReference type="Rhea" id="RHEA:64105"/>
    </physiologicalReaction>
</comment>
<comment type="pathway">
    <text evidence="1">Nucleotide-sugar biosynthesis; UDP-N-acetyl-alpha-D-glucosamine biosynthesis; UDP-N-acetyl-alpha-D-glucosamine from N-acetyl-alpha-D-glucosamine 1-phosphate: step 1/1.</text>
</comment>
<comment type="subunit">
    <text evidence="1">Monomer and homodimer.</text>
</comment>
<comment type="subunit">
    <molecule>Isoform AGX1</molecule>
    <text evidence="1">Homodimer.</text>
</comment>
<comment type="subunit">
    <molecule>Isoform AGX2</molecule>
    <text evidence="1">Homodimer.</text>
</comment>
<comment type="subcellular location">
    <subcellularLocation>
        <location evidence="1">Cytoplasm</location>
        <location evidence="1">Cytosol</location>
    </subcellularLocation>
</comment>
<comment type="alternative products">
    <event type="alternative splicing"/>
    <isoform>
        <id>Q91YN5-1</id>
        <name>AGX2</name>
        <sequence type="displayed"/>
    </isoform>
    <isoform>
        <id>Q91YN5-2</id>
        <name>AGX1</name>
        <sequence type="described" ref="VSP_014525"/>
    </isoform>
    <isoform>
        <id>Q91YN5-3</id>
        <name>3</name>
        <sequence type="described" ref="VSP_014524"/>
    </isoform>
</comment>
<comment type="disruption phenotype">
    <text evidence="3">Embryonic lethality ar 9.5 dpc.</text>
</comment>
<comment type="similarity">
    <text evidence="6">Belongs to the UDPGP type 1 family.</text>
</comment>
<sequence>MNVNDLKQRLSQAGQEHLLQFWNELSEAQQVELYMELQAMNFEELNSFFRKAIGEFDRSSHQEKVDARMEPVPRQVLGSATRDQEQLQAWESEGLSQISQNKVAVLLLAGGQGTRLGVSYPKGMYDVGLPSHKTLFQIQAERILKLQQLAEKHHGNKCTIPWYIMTSGRTMESTKEFFTKHKFFGLKKENVVFFQQGMLPAMSFDGKIILEEKNKVSMAPDGNGGLYRALAAQNIVEDMEQRGICSIHVYCVDNILVKVADPRFIGFCIQKGADCGAKVVEKTNPTEPVGVVCRVDGVYQVVEYSEISLATAQRRSSDGRLLFNAGNIANHFFTVPFLKDVVNVYEPQLQHHVAQKKIPYVDSQGYFIKPDKPNGIKMEKFVFDIFQFAKKFVVYEVLREDEFSPLKNADSQNGKDNPTTARHALMSLHHCWVLNAGGHFIDENGSRLPAIPRSATNGKSEAITADVNHNLKDANDVPIQCEISPLISYAGEGLEGYVADKEFHAPLIIDENGVHELVKNGI</sequence>
<feature type="chain" id="PRO_0000185768" description="UDP-N-acetylhexosamine pyrophosphorylase">
    <location>
        <begin position="1"/>
        <end position="522"/>
    </location>
</feature>
<feature type="binding site" evidence="1">
    <location>
        <position position="108"/>
    </location>
    <ligand>
        <name>UDP-N-acetyl-alpha-D-galactosamine</name>
        <dbReference type="ChEBI" id="CHEBI:67138"/>
        <label>1</label>
    </ligand>
</feature>
<feature type="binding site" evidence="1">
    <location>
        <position position="108"/>
    </location>
    <ligand>
        <name>UDP-N-acetyl-alpha-D-glucosamine</name>
        <dbReference type="ChEBI" id="CHEBI:57705"/>
        <label>1</label>
    </ligand>
</feature>
<feature type="binding site" evidence="1">
    <location>
        <position position="110"/>
    </location>
    <ligand>
        <name>UDP-N-acetyl-alpha-D-galactosamine</name>
        <dbReference type="ChEBI" id="CHEBI:67138"/>
        <label>1</label>
    </ligand>
</feature>
<feature type="binding site" evidence="1">
    <location>
        <position position="110"/>
    </location>
    <ligand>
        <name>UDP-N-acetyl-alpha-D-glucosamine</name>
        <dbReference type="ChEBI" id="CHEBI:57705"/>
        <label>1</label>
    </ligand>
</feature>
<feature type="binding site" evidence="1">
    <location>
        <position position="111"/>
    </location>
    <ligand>
        <name>UDP-N-acetyl-alpha-D-galactosamine</name>
        <dbReference type="ChEBI" id="CHEBI:67138"/>
        <label>1</label>
    </ligand>
</feature>
<feature type="binding site" evidence="1">
    <location>
        <position position="111"/>
    </location>
    <ligand>
        <name>UDP-N-acetyl-alpha-D-glucosamine</name>
        <dbReference type="ChEBI" id="CHEBI:57705"/>
        <label>1</label>
    </ligand>
</feature>
<feature type="binding site" evidence="1">
    <location>
        <position position="196"/>
    </location>
    <ligand>
        <name>UDP-N-acetyl-alpha-D-galactosamine</name>
        <dbReference type="ChEBI" id="CHEBI:67138"/>
        <label>1</label>
    </ligand>
</feature>
<feature type="binding site" evidence="1">
    <location>
        <position position="196"/>
    </location>
    <ligand>
        <name>UDP-N-acetyl-alpha-D-glucosamine</name>
        <dbReference type="ChEBI" id="CHEBI:57705"/>
        <label>1</label>
    </ligand>
</feature>
<feature type="binding site" evidence="1">
    <location>
        <position position="222"/>
    </location>
    <ligand>
        <name>UDP-N-acetyl-alpha-D-galactosamine</name>
        <dbReference type="ChEBI" id="CHEBI:67138"/>
        <label>1</label>
    </ligand>
</feature>
<feature type="binding site" evidence="1">
    <location>
        <position position="222"/>
    </location>
    <ligand>
        <name>UDP-N-acetyl-alpha-D-glucosamine</name>
        <dbReference type="ChEBI" id="CHEBI:57705"/>
        <label>1</label>
    </ligand>
</feature>
<feature type="binding site" evidence="1">
    <location>
        <position position="223"/>
    </location>
    <ligand>
        <name>UDP-N-acetyl-alpha-D-galactosamine</name>
        <dbReference type="ChEBI" id="CHEBI:67138"/>
        <label>1</label>
    </ligand>
</feature>
<feature type="binding site" evidence="1">
    <location>
        <position position="223"/>
    </location>
    <ligand>
        <name>UDP-N-acetyl-alpha-D-glucosamine</name>
        <dbReference type="ChEBI" id="CHEBI:57705"/>
        <label>1</label>
    </ligand>
</feature>
<feature type="binding site" evidence="1">
    <location>
        <position position="251"/>
    </location>
    <ligand>
        <name>UDP-N-acetyl-alpha-D-galactosamine</name>
        <dbReference type="ChEBI" id="CHEBI:67138"/>
        <label>1</label>
    </ligand>
</feature>
<feature type="binding site" evidence="1">
    <location>
        <position position="251"/>
    </location>
    <ligand>
        <name>UDP-N-acetyl-alpha-D-glucosamine</name>
        <dbReference type="ChEBI" id="CHEBI:57705"/>
        <label>1</label>
    </ligand>
</feature>
<feature type="binding site" evidence="1">
    <location>
        <position position="252"/>
    </location>
    <ligand>
        <name>UDP-N-acetyl-alpha-D-galactosamine</name>
        <dbReference type="ChEBI" id="CHEBI:67138"/>
        <label>1</label>
    </ligand>
</feature>
<feature type="binding site" evidence="1">
    <location>
        <position position="252"/>
    </location>
    <ligand>
        <name>UDP-N-acetyl-alpha-D-glucosamine</name>
        <dbReference type="ChEBI" id="CHEBI:57705"/>
        <label>1</label>
    </ligand>
</feature>
<feature type="binding site" evidence="1">
    <location>
        <position position="290"/>
    </location>
    <ligand>
        <name>UDP-N-acetyl-alpha-D-galactosamine</name>
        <dbReference type="ChEBI" id="CHEBI:67138"/>
        <label>1</label>
    </ligand>
</feature>
<feature type="binding site" evidence="1">
    <location>
        <position position="290"/>
    </location>
    <ligand>
        <name>UDP-N-acetyl-alpha-D-glucosamine</name>
        <dbReference type="ChEBI" id="CHEBI:57705"/>
        <label>1</label>
    </ligand>
</feature>
<feature type="binding site" evidence="1">
    <location>
        <position position="303"/>
    </location>
    <ligand>
        <name>UDP-N-acetyl-alpha-D-galactosamine</name>
        <dbReference type="ChEBI" id="CHEBI:67138"/>
        <label>1</label>
    </ligand>
</feature>
<feature type="binding site" evidence="1">
    <location>
        <position position="303"/>
    </location>
    <ligand>
        <name>UDP-N-acetyl-alpha-D-glucosamine</name>
        <dbReference type="ChEBI" id="CHEBI:57705"/>
        <label>1</label>
    </ligand>
</feature>
<feature type="binding site" evidence="1">
    <location>
        <position position="304"/>
    </location>
    <ligand>
        <name>UDP-N-acetyl-alpha-D-galactosamine</name>
        <dbReference type="ChEBI" id="CHEBI:67138"/>
        <label>1</label>
    </ligand>
</feature>
<feature type="binding site" evidence="1">
    <location>
        <position position="304"/>
    </location>
    <ligand>
        <name>UDP-N-acetyl-alpha-D-glucosamine</name>
        <dbReference type="ChEBI" id="CHEBI:57705"/>
        <label>1</label>
    </ligand>
</feature>
<feature type="binding site" evidence="1">
    <location>
        <position position="327"/>
    </location>
    <ligand>
        <name>UDP-N-acetyl-alpha-D-galactosamine</name>
        <dbReference type="ChEBI" id="CHEBI:67138"/>
        <label>1</label>
    </ligand>
</feature>
<feature type="binding site" evidence="1">
    <location>
        <position position="327"/>
    </location>
    <ligand>
        <name>UDP-N-acetyl-alpha-D-glucosamine</name>
        <dbReference type="ChEBI" id="CHEBI:57705"/>
        <label>1</label>
    </ligand>
</feature>
<feature type="binding site" evidence="1">
    <location>
        <position position="381"/>
    </location>
    <ligand>
        <name>UDP-N-acetyl-alpha-D-glucosamine</name>
        <dbReference type="ChEBI" id="CHEBI:57705"/>
        <label>1</label>
    </ligand>
</feature>
<feature type="binding site" evidence="1">
    <location>
        <position position="407"/>
    </location>
    <ligand>
        <name>UDP-N-acetyl-alpha-D-galactosamine</name>
        <dbReference type="ChEBI" id="CHEBI:67138"/>
        <label>1</label>
    </ligand>
</feature>
<feature type="binding site" evidence="1">
    <location>
        <position position="407"/>
    </location>
    <ligand>
        <name>UDP-N-acetyl-alpha-D-glucosamine</name>
        <dbReference type="ChEBI" id="CHEBI:57705"/>
        <label>1</label>
    </ligand>
</feature>
<feature type="binding site" evidence="1">
    <location>
        <position position="472"/>
    </location>
    <ligand>
        <name>UDP-N-acetyl-alpha-D-galactosamine</name>
        <dbReference type="ChEBI" id="CHEBI:67138"/>
        <label>2</label>
    </ligand>
</feature>
<feature type="binding site" evidence="1">
    <location>
        <position position="472"/>
    </location>
    <ligand>
        <name>UDP-N-acetyl-alpha-D-glucosamine</name>
        <dbReference type="ChEBI" id="CHEBI:57705"/>
        <label>2</label>
    </ligand>
</feature>
<feature type="splice variant" id="VSP_014525" description="In isoform AGX1." evidence="5">
    <location>
        <begin position="454"/>
        <end position="470"/>
    </location>
</feature>
<feature type="splice variant" id="VSP_014524" description="In isoform 3." evidence="4 5">
    <location>
        <position position="454"/>
    </location>
</feature>
<feature type="sequence variant" description="In strain: C57BL/6J." evidence="2">
    <original>Y</original>
    <variation>H</variation>
    <location>
        <position position="366"/>
    </location>
</feature>
<feature type="helix" evidence="8">
    <location>
        <begin position="3"/>
        <end position="11"/>
    </location>
</feature>
<feature type="turn" evidence="8">
    <location>
        <begin position="12"/>
        <end position="14"/>
    </location>
</feature>
<feature type="helix" evidence="8">
    <location>
        <begin position="16"/>
        <end position="19"/>
    </location>
</feature>
<feature type="helix" evidence="8">
    <location>
        <begin position="22"/>
        <end position="24"/>
    </location>
</feature>
<feature type="helix" evidence="8">
    <location>
        <begin position="27"/>
        <end position="38"/>
    </location>
</feature>
<feature type="helix" evidence="8">
    <location>
        <begin position="44"/>
        <end position="56"/>
    </location>
</feature>
<feature type="turn" evidence="8">
    <location>
        <begin position="57"/>
        <end position="61"/>
    </location>
</feature>
<feature type="helix" evidence="8">
    <location>
        <begin position="65"/>
        <end position="67"/>
    </location>
</feature>
<feature type="strand" evidence="8">
    <location>
        <begin position="68"/>
        <end position="70"/>
    </location>
</feature>
<feature type="helix" evidence="8">
    <location>
        <begin position="74"/>
        <end position="76"/>
    </location>
</feature>
<feature type="strand" evidence="8">
    <location>
        <begin position="77"/>
        <end position="79"/>
    </location>
</feature>
<feature type="turn" evidence="8">
    <location>
        <begin position="80"/>
        <end position="82"/>
    </location>
</feature>
<feature type="helix" evidence="8">
    <location>
        <begin position="86"/>
        <end position="99"/>
    </location>
</feature>
<feature type="strand" evidence="8">
    <location>
        <begin position="103"/>
        <end position="108"/>
    </location>
</feature>
<feature type="turn" evidence="8">
    <location>
        <begin position="114"/>
        <end position="117"/>
    </location>
</feature>
<feature type="strand" evidence="8">
    <location>
        <begin position="119"/>
        <end position="121"/>
    </location>
</feature>
<feature type="helix" evidence="8">
    <location>
        <begin position="122"/>
        <end position="124"/>
    </location>
</feature>
<feature type="helix" evidence="8">
    <location>
        <begin position="135"/>
        <end position="154"/>
    </location>
</feature>
<feature type="strand" evidence="8">
    <location>
        <begin position="162"/>
        <end position="166"/>
    </location>
</feature>
<feature type="turn" evidence="8">
    <location>
        <begin position="168"/>
        <end position="170"/>
    </location>
</feature>
<feature type="helix" evidence="8">
    <location>
        <begin position="171"/>
        <end position="180"/>
    </location>
</feature>
<feature type="helix" evidence="8">
    <location>
        <begin position="182"/>
        <end position="185"/>
    </location>
</feature>
<feature type="helix" evidence="8">
    <location>
        <begin position="188"/>
        <end position="190"/>
    </location>
</feature>
<feature type="strand" evidence="8">
    <location>
        <begin position="191"/>
        <end position="195"/>
    </location>
</feature>
<feature type="strand" evidence="8">
    <location>
        <begin position="198"/>
        <end position="200"/>
    </location>
</feature>
<feature type="strand" evidence="8">
    <location>
        <begin position="210"/>
        <end position="212"/>
    </location>
</feature>
<feature type="strand" evidence="8">
    <location>
        <begin position="218"/>
        <end position="220"/>
    </location>
</feature>
<feature type="helix" evidence="8">
    <location>
        <begin position="225"/>
        <end position="232"/>
    </location>
</feature>
<feature type="helix" evidence="8">
    <location>
        <begin position="235"/>
        <end position="242"/>
    </location>
</feature>
<feature type="strand" evidence="8">
    <location>
        <begin position="246"/>
        <end position="251"/>
    </location>
</feature>
<feature type="helix" evidence="8">
    <location>
        <begin position="262"/>
        <end position="270"/>
    </location>
</feature>
<feature type="strand" evidence="8">
    <location>
        <begin position="274"/>
        <end position="281"/>
    </location>
</feature>
<feature type="strand" evidence="8">
    <location>
        <begin position="291"/>
        <end position="295"/>
    </location>
</feature>
<feature type="strand" evidence="8">
    <location>
        <begin position="298"/>
        <end position="302"/>
    </location>
</feature>
<feature type="turn" evidence="8">
    <location>
        <begin position="304"/>
        <end position="306"/>
    </location>
</feature>
<feature type="helix" evidence="8">
    <location>
        <begin position="309"/>
        <end position="313"/>
    </location>
</feature>
<feature type="strand" evidence="8">
    <location>
        <begin position="319"/>
        <end position="323"/>
    </location>
</feature>
<feature type="strand" evidence="8">
    <location>
        <begin position="325"/>
        <end position="334"/>
    </location>
</feature>
<feature type="helix" evidence="8">
    <location>
        <begin position="335"/>
        <end position="343"/>
    </location>
</feature>
<feature type="helix" evidence="8">
    <location>
        <begin position="345"/>
        <end position="348"/>
    </location>
</feature>
<feature type="strand" evidence="8">
    <location>
        <begin position="352"/>
        <end position="356"/>
    </location>
</feature>
<feature type="strand" evidence="8">
    <location>
        <begin position="375"/>
        <end position="379"/>
    </location>
</feature>
<feature type="helix" evidence="8">
    <location>
        <begin position="382"/>
        <end position="388"/>
    </location>
</feature>
<feature type="strand" evidence="8">
    <location>
        <begin position="390"/>
        <end position="397"/>
    </location>
</feature>
<feature type="helix" evidence="8">
    <location>
        <begin position="399"/>
        <end position="402"/>
    </location>
</feature>
<feature type="helix" evidence="8">
    <location>
        <begin position="418"/>
        <end position="435"/>
    </location>
</feature>
<feature type="strand" evidence="8">
    <location>
        <begin position="438"/>
        <end position="441"/>
    </location>
</feature>
<feature type="strand" evidence="8">
    <location>
        <begin position="481"/>
        <end position="483"/>
    </location>
</feature>
<feature type="turn" evidence="8">
    <location>
        <begin position="485"/>
        <end position="487"/>
    </location>
</feature>
<feature type="strand" evidence="8">
    <location>
        <begin position="489"/>
        <end position="491"/>
    </location>
</feature>
<feature type="helix" evidence="8">
    <location>
        <begin position="495"/>
        <end position="498"/>
    </location>
</feature>
<feature type="strand" evidence="8">
    <location>
        <begin position="501"/>
        <end position="503"/>
    </location>
</feature>
<feature type="strand" evidence="8">
    <location>
        <begin position="505"/>
        <end position="510"/>
    </location>
</feature>
<feature type="strand" evidence="8">
    <location>
        <begin position="513"/>
        <end position="516"/>
    </location>
</feature>
<evidence type="ECO:0000250" key="1">
    <source>
        <dbReference type="UniProtKB" id="Q16222"/>
    </source>
</evidence>
<evidence type="ECO:0000269" key="2">
    <source>
    </source>
</evidence>
<evidence type="ECO:0000269" key="3">
    <source>
    </source>
</evidence>
<evidence type="ECO:0000303" key="4">
    <source>
    </source>
</evidence>
<evidence type="ECO:0000303" key="5">
    <source>
    </source>
</evidence>
<evidence type="ECO:0000305" key="6"/>
<evidence type="ECO:0000312" key="7">
    <source>
        <dbReference type="MGI" id="MGI:1334459"/>
    </source>
</evidence>
<evidence type="ECO:0007829" key="8">
    <source>
        <dbReference type="PDB" id="1VM8"/>
    </source>
</evidence>
<name>UAP1_MOUSE</name>
<gene>
    <name evidence="7" type="primary">Uap1</name>
</gene>
<accession>Q91YN5</accession>
<accession>Q8BG76</accession>
<accession>Q8BXD6</accession>
<accession>Q8VD59</accession>
<protein>
    <recommendedName>
        <fullName evidence="6">UDP-N-acetylhexosamine pyrophosphorylase</fullName>
    </recommendedName>
    <alternativeName>
        <fullName evidence="6">Protein-pyrophosphorylation enzyme</fullName>
        <ecNumber evidence="1">2.7.4.-</ecNumber>
    </alternativeName>
    <alternativeName>
        <fullName evidence="6">UDP-N-acetylgalactosamine pyrophosphorylase</fullName>
        <ecNumber evidence="1">2.7.7.83</ecNumber>
    </alternativeName>
    <alternativeName>
        <fullName evidence="6">UDP-N-acetylglucosamine pyrophosphorylase</fullName>
        <ecNumber evidence="1">2.7.7.23</ecNumber>
    </alternativeName>
</protein>